<proteinExistence type="evidence at protein level"/>
<comment type="function">
    <text>Not known. Could be involved in the oxidation of intracellular sulfur.</text>
</comment>
<comment type="subcellular location">
    <subcellularLocation>
        <location evidence="1">Cytoplasm</location>
    </subcellularLocation>
</comment>
<comment type="similarity">
    <text evidence="2">Belongs to the DsrE/TusD family.</text>
</comment>
<organism>
    <name type="scientific">Allochromatium vinosum (strain ATCC 17899 / DSM 180 / NBRC 103801 / NCIMB 10441 / D)</name>
    <name type="common">Chromatium vinosum</name>
    <dbReference type="NCBI Taxonomy" id="572477"/>
    <lineage>
        <taxon>Bacteria</taxon>
        <taxon>Pseudomonadati</taxon>
        <taxon>Pseudomonadota</taxon>
        <taxon>Gammaproteobacteria</taxon>
        <taxon>Chromatiales</taxon>
        <taxon>Chromatiaceae</taxon>
        <taxon>Allochromatium</taxon>
    </lineage>
</organism>
<feature type="chain" id="PRO_0000214720" description="Putative sulfurtransferase DsrE">
    <location>
        <begin position="1"/>
        <end position="130"/>
    </location>
</feature>
<feature type="active site" description="Cysteine persulfide intermediate" evidence="1">
    <location>
        <position position="78"/>
    </location>
</feature>
<feature type="strand" evidence="3">
    <location>
        <begin position="2"/>
        <end position="7"/>
    </location>
</feature>
<feature type="turn" evidence="3">
    <location>
        <begin position="11"/>
        <end position="13"/>
    </location>
</feature>
<feature type="helix" evidence="3">
    <location>
        <begin position="16"/>
        <end position="29"/>
    </location>
</feature>
<feature type="strand" evidence="3">
    <location>
        <begin position="33"/>
        <end position="39"/>
    </location>
</feature>
<feature type="helix" evidence="3">
    <location>
        <begin position="41"/>
        <end position="47"/>
    </location>
</feature>
<feature type="helix" evidence="3">
    <location>
        <begin position="60"/>
        <end position="71"/>
    </location>
</feature>
<feature type="strand" evidence="3">
    <location>
        <begin position="75"/>
        <end position="78"/>
    </location>
</feature>
<feature type="helix" evidence="3">
    <location>
        <begin position="79"/>
        <end position="85"/>
    </location>
</feature>
<feature type="helix" evidence="3">
    <location>
        <begin position="90"/>
        <end position="96"/>
    </location>
</feature>
<feature type="strand" evidence="3">
    <location>
        <begin position="108"/>
        <end position="110"/>
    </location>
</feature>
<feature type="helix" evidence="3">
    <location>
        <begin position="113"/>
        <end position="121"/>
    </location>
</feature>
<feature type="strand" evidence="3">
    <location>
        <begin position="122"/>
        <end position="128"/>
    </location>
</feature>
<evidence type="ECO:0000250" key="1"/>
<evidence type="ECO:0000305" key="2"/>
<evidence type="ECO:0007829" key="3">
    <source>
        <dbReference type="PDB" id="2HY5"/>
    </source>
</evidence>
<reference key="1">
    <citation type="journal article" date="1998" name="Microbiology">
        <title>Sirohaem sulfite reductase and other proteins encoded by genes at the dsr locus of Chromatium vinosum are involved in the oxidation of intracellular sulfur.</title>
        <authorList>
            <person name="Pott A.S."/>
            <person name="Dahl C."/>
        </authorList>
    </citation>
    <scope>NUCLEOTIDE SEQUENCE [GENOMIC DNA]</scope>
</reference>
<reference key="2">
    <citation type="journal article" date="2011" name="Stand. Genomic Sci.">
        <title>Complete genome sequence of Allochromatium vinosum DSM 180(T).</title>
        <authorList>
            <person name="Weissgerber T."/>
            <person name="Zigann R."/>
            <person name="Bruce D."/>
            <person name="Chang Y.J."/>
            <person name="Detter J.C."/>
            <person name="Han C."/>
            <person name="Hauser L."/>
            <person name="Jeffries C.D."/>
            <person name="Land M."/>
            <person name="Munk A.C."/>
            <person name="Tapia R."/>
            <person name="Dahl C."/>
        </authorList>
    </citation>
    <scope>NUCLEOTIDE SEQUENCE [LARGE SCALE GENOMIC DNA]</scope>
    <source>
        <strain>ATCC 17899 / DSM 180 / NBRC 103801 / NCIMB 10441 / D</strain>
    </source>
</reference>
<sequence>MKFALQINEGPYQHQASDSAYQFAKAALEKGHEIFRVFFYHDGVNNSTRLTTPPQDDRHIVNRWAELAEQYELDMVVCVAAAQRRGIVDEGEASRNGKDATNIHPKFRISGLGQLVEAAIQADRLVVFGD</sequence>
<accession>O87896</accession>
<accession>D3RSN3</accession>
<gene>
    <name type="primary">dsrE</name>
    <name type="ordered locus">Alvin_1253</name>
</gene>
<keyword id="KW-0002">3D-structure</keyword>
<keyword id="KW-0963">Cytoplasm</keyword>
<keyword id="KW-1185">Reference proteome</keyword>
<keyword id="KW-0808">Transferase</keyword>
<protein>
    <recommendedName>
        <fullName>Putative sulfurtransferase DsrE</fullName>
        <ecNumber>2.8.1.-</ecNumber>
    </recommendedName>
    <alternativeName>
        <fullName>Intracellular sulfur oxidation protein DsrE</fullName>
    </alternativeName>
</protein>
<name>DSRE_ALLVD</name>
<dbReference type="EC" id="2.8.1.-"/>
<dbReference type="EMBL" id="U84760">
    <property type="protein sequence ID" value="AAC35396.1"/>
    <property type="molecule type" value="Genomic_DNA"/>
</dbReference>
<dbReference type="EMBL" id="CP001896">
    <property type="protein sequence ID" value="ADC62192.1"/>
    <property type="molecule type" value="Genomic_DNA"/>
</dbReference>
<dbReference type="RefSeq" id="WP_012970466.1">
    <property type="nucleotide sequence ID" value="NC_013851.1"/>
</dbReference>
<dbReference type="PDB" id="2HY5">
    <property type="method" value="X-ray"/>
    <property type="resolution" value="1.72 A"/>
    <property type="chains" value="A=1-130"/>
</dbReference>
<dbReference type="PDB" id="2HYB">
    <property type="method" value="X-ray"/>
    <property type="resolution" value="2.50 A"/>
    <property type="chains" value="A/D/G/J/M/P=1-130"/>
</dbReference>
<dbReference type="PDBsum" id="2HY5"/>
<dbReference type="PDBsum" id="2HYB"/>
<dbReference type="SMR" id="O87896"/>
<dbReference type="STRING" id="572477.Alvin_1253"/>
<dbReference type="KEGG" id="alv:Alvin_1253"/>
<dbReference type="eggNOG" id="COG1553">
    <property type="taxonomic scope" value="Bacteria"/>
</dbReference>
<dbReference type="HOGENOM" id="CLU_132095_0_0_6"/>
<dbReference type="OrthoDB" id="9787483at2"/>
<dbReference type="BioCyc" id="MetaCyc:MONOMER-16054"/>
<dbReference type="EvolutionaryTrace" id="O87896"/>
<dbReference type="Proteomes" id="UP000001441">
    <property type="component" value="Chromosome"/>
</dbReference>
<dbReference type="GO" id="GO:1990228">
    <property type="term" value="C:sulfurtransferase complex"/>
    <property type="evidence" value="ECO:0007669"/>
    <property type="project" value="TreeGrafter"/>
</dbReference>
<dbReference type="GO" id="GO:0097163">
    <property type="term" value="F:sulfur carrier activity"/>
    <property type="evidence" value="ECO:0007669"/>
    <property type="project" value="TreeGrafter"/>
</dbReference>
<dbReference type="GO" id="GO:0016783">
    <property type="term" value="F:sulfurtransferase activity"/>
    <property type="evidence" value="ECO:0007669"/>
    <property type="project" value="InterPro"/>
</dbReference>
<dbReference type="GO" id="GO:0019417">
    <property type="term" value="P:sulfur oxidation"/>
    <property type="evidence" value="ECO:0000315"/>
    <property type="project" value="CACAO"/>
</dbReference>
<dbReference type="GO" id="GO:0002143">
    <property type="term" value="P:tRNA wobble position uridine thiolation"/>
    <property type="evidence" value="ECO:0007669"/>
    <property type="project" value="TreeGrafter"/>
</dbReference>
<dbReference type="FunFam" id="3.40.1260.10:FF:000001">
    <property type="entry name" value="Sulfurtransferase TusD"/>
    <property type="match status" value="1"/>
</dbReference>
<dbReference type="Gene3D" id="3.40.1260.10">
    <property type="entry name" value="DsrEFH-like"/>
    <property type="match status" value="1"/>
</dbReference>
<dbReference type="InterPro" id="IPR027396">
    <property type="entry name" value="DsrEFH-like"/>
</dbReference>
<dbReference type="InterPro" id="IPR003787">
    <property type="entry name" value="Sulphur_relay_DsrE/F-like"/>
</dbReference>
<dbReference type="InterPro" id="IPR017463">
    <property type="entry name" value="Sulphur_relay_TusD/DsrE"/>
</dbReference>
<dbReference type="NCBIfam" id="NF001237">
    <property type="entry name" value="PRK00207.1"/>
    <property type="match status" value="1"/>
</dbReference>
<dbReference type="NCBIfam" id="TIGR03012">
    <property type="entry name" value="sulf_tusD_dsrE"/>
    <property type="match status" value="1"/>
</dbReference>
<dbReference type="PANTHER" id="PTHR34874">
    <property type="entry name" value="PROTEIN YCHN"/>
    <property type="match status" value="1"/>
</dbReference>
<dbReference type="PANTHER" id="PTHR34874:SF3">
    <property type="entry name" value="SULFURTRANSFERASE TUSD"/>
    <property type="match status" value="1"/>
</dbReference>
<dbReference type="Pfam" id="PF02635">
    <property type="entry name" value="DsrE"/>
    <property type="match status" value="1"/>
</dbReference>
<dbReference type="SUPFAM" id="SSF75169">
    <property type="entry name" value="DsrEFH-like"/>
    <property type="match status" value="1"/>
</dbReference>